<organism>
    <name type="scientific">Streptomyces avermitilis (strain ATCC 31267 / DSM 46492 / JCM 5070 / NBRC 14893 / NCIMB 12804 / NRRL 8165 / MA-4680)</name>
    <dbReference type="NCBI Taxonomy" id="227882"/>
    <lineage>
        <taxon>Bacteria</taxon>
        <taxon>Bacillati</taxon>
        <taxon>Actinomycetota</taxon>
        <taxon>Actinomycetes</taxon>
        <taxon>Kitasatosporales</taxon>
        <taxon>Streptomycetaceae</taxon>
        <taxon>Streptomyces</taxon>
    </lineage>
</organism>
<gene>
    <name evidence="1" type="primary">rsgA</name>
    <name type="ordered locus">SAV_2086</name>
</gene>
<comment type="function">
    <text evidence="1">One of several proteins that assist in the late maturation steps of the functional core of the 30S ribosomal subunit. Helps release RbfA from mature subunits. May play a role in the assembly of ribosomal proteins into the subunit. Circularly permuted GTPase that catalyzes slow GTP hydrolysis, GTPase activity is stimulated by the 30S ribosomal subunit.</text>
</comment>
<comment type="cofactor">
    <cofactor evidence="1">
        <name>Zn(2+)</name>
        <dbReference type="ChEBI" id="CHEBI:29105"/>
    </cofactor>
    <text evidence="1">Binds 1 zinc ion per subunit.</text>
</comment>
<comment type="subunit">
    <text evidence="1">Monomer. Associates with 30S ribosomal subunit, binds 16S rRNA.</text>
</comment>
<comment type="subcellular location">
    <subcellularLocation>
        <location evidence="1">Cytoplasm</location>
    </subcellularLocation>
</comment>
<comment type="similarity">
    <text evidence="1">Belongs to the TRAFAC class YlqF/YawG GTPase family. RsgA subfamily.</text>
</comment>
<comment type="sequence caution" evidence="3">
    <conflict type="erroneous initiation">
        <sequence resource="EMBL-CDS" id="BAC69797"/>
    </conflict>
    <text>Extended N-terminus.</text>
</comment>
<dbReference type="EC" id="3.6.1.-" evidence="1"/>
<dbReference type="EMBL" id="BA000030">
    <property type="protein sequence ID" value="BAC69797.1"/>
    <property type="status" value="ALT_INIT"/>
    <property type="molecule type" value="Genomic_DNA"/>
</dbReference>
<dbReference type="RefSeq" id="WP_037647445.1">
    <property type="nucleotide sequence ID" value="NZ_JZJK01000086.1"/>
</dbReference>
<dbReference type="SMR" id="Q82LC4"/>
<dbReference type="GeneID" id="41539183"/>
<dbReference type="KEGG" id="sma:SAVERM_2086"/>
<dbReference type="eggNOG" id="COG1162">
    <property type="taxonomic scope" value="Bacteria"/>
</dbReference>
<dbReference type="HOGENOM" id="CLU_033617_0_1_11"/>
<dbReference type="OrthoDB" id="9809485at2"/>
<dbReference type="Proteomes" id="UP000000428">
    <property type="component" value="Chromosome"/>
</dbReference>
<dbReference type="GO" id="GO:0005737">
    <property type="term" value="C:cytoplasm"/>
    <property type="evidence" value="ECO:0007669"/>
    <property type="project" value="UniProtKB-SubCell"/>
</dbReference>
<dbReference type="GO" id="GO:0005525">
    <property type="term" value="F:GTP binding"/>
    <property type="evidence" value="ECO:0007669"/>
    <property type="project" value="UniProtKB-UniRule"/>
</dbReference>
<dbReference type="GO" id="GO:0003924">
    <property type="term" value="F:GTPase activity"/>
    <property type="evidence" value="ECO:0007669"/>
    <property type="project" value="UniProtKB-UniRule"/>
</dbReference>
<dbReference type="GO" id="GO:0046872">
    <property type="term" value="F:metal ion binding"/>
    <property type="evidence" value="ECO:0007669"/>
    <property type="project" value="UniProtKB-KW"/>
</dbReference>
<dbReference type="GO" id="GO:0019843">
    <property type="term" value="F:rRNA binding"/>
    <property type="evidence" value="ECO:0007669"/>
    <property type="project" value="UniProtKB-KW"/>
</dbReference>
<dbReference type="GO" id="GO:0042274">
    <property type="term" value="P:ribosomal small subunit biogenesis"/>
    <property type="evidence" value="ECO:0007669"/>
    <property type="project" value="UniProtKB-UniRule"/>
</dbReference>
<dbReference type="CDD" id="cd01854">
    <property type="entry name" value="YjeQ_EngC"/>
    <property type="match status" value="1"/>
</dbReference>
<dbReference type="Gene3D" id="3.40.50.300">
    <property type="entry name" value="P-loop containing nucleotide triphosphate hydrolases"/>
    <property type="match status" value="1"/>
</dbReference>
<dbReference type="Gene3D" id="1.10.40.50">
    <property type="entry name" value="Probable gtpase engc, domain 3"/>
    <property type="match status" value="1"/>
</dbReference>
<dbReference type="HAMAP" id="MF_01820">
    <property type="entry name" value="GTPase_RsgA"/>
    <property type="match status" value="1"/>
</dbReference>
<dbReference type="InterPro" id="IPR030378">
    <property type="entry name" value="G_CP_dom"/>
</dbReference>
<dbReference type="InterPro" id="IPR027417">
    <property type="entry name" value="P-loop_NTPase"/>
</dbReference>
<dbReference type="InterPro" id="IPR004881">
    <property type="entry name" value="Ribosome_biogen_GTPase_RsgA"/>
</dbReference>
<dbReference type="InterPro" id="IPR010914">
    <property type="entry name" value="RsgA_GTPase_dom"/>
</dbReference>
<dbReference type="NCBIfam" id="TIGR00157">
    <property type="entry name" value="ribosome small subunit-dependent GTPase A"/>
    <property type="match status" value="1"/>
</dbReference>
<dbReference type="PANTHER" id="PTHR32120">
    <property type="entry name" value="SMALL RIBOSOMAL SUBUNIT BIOGENESIS GTPASE RSGA"/>
    <property type="match status" value="1"/>
</dbReference>
<dbReference type="PANTHER" id="PTHR32120:SF10">
    <property type="entry name" value="SMALL RIBOSOMAL SUBUNIT BIOGENESIS GTPASE RSGA"/>
    <property type="match status" value="1"/>
</dbReference>
<dbReference type="Pfam" id="PF03193">
    <property type="entry name" value="RsgA_GTPase"/>
    <property type="match status" value="1"/>
</dbReference>
<dbReference type="SUPFAM" id="SSF52540">
    <property type="entry name" value="P-loop containing nucleoside triphosphate hydrolases"/>
    <property type="match status" value="1"/>
</dbReference>
<dbReference type="PROSITE" id="PS50936">
    <property type="entry name" value="ENGC_GTPASE"/>
    <property type="match status" value="1"/>
</dbReference>
<dbReference type="PROSITE" id="PS51721">
    <property type="entry name" value="G_CP"/>
    <property type="match status" value="1"/>
</dbReference>
<reference key="1">
    <citation type="journal article" date="2001" name="Proc. Natl. Acad. Sci. U.S.A.">
        <title>Genome sequence of an industrial microorganism Streptomyces avermitilis: deducing the ability of producing secondary metabolites.</title>
        <authorList>
            <person name="Omura S."/>
            <person name="Ikeda H."/>
            <person name="Ishikawa J."/>
            <person name="Hanamoto A."/>
            <person name="Takahashi C."/>
            <person name="Shinose M."/>
            <person name="Takahashi Y."/>
            <person name="Horikawa H."/>
            <person name="Nakazawa H."/>
            <person name="Osonoe T."/>
            <person name="Kikuchi H."/>
            <person name="Shiba T."/>
            <person name="Sakaki Y."/>
            <person name="Hattori M."/>
        </authorList>
    </citation>
    <scope>NUCLEOTIDE SEQUENCE [LARGE SCALE GENOMIC DNA]</scope>
    <source>
        <strain>ATCC 31267 / DSM 46492 / JCM 5070 / NBRC 14893 / NCIMB 12804 / NRRL 8165 / MA-4680</strain>
    </source>
</reference>
<reference key="2">
    <citation type="journal article" date="2003" name="Nat. Biotechnol.">
        <title>Complete genome sequence and comparative analysis of the industrial microorganism Streptomyces avermitilis.</title>
        <authorList>
            <person name="Ikeda H."/>
            <person name="Ishikawa J."/>
            <person name="Hanamoto A."/>
            <person name="Shinose M."/>
            <person name="Kikuchi H."/>
            <person name="Shiba T."/>
            <person name="Sakaki Y."/>
            <person name="Hattori M."/>
            <person name="Omura S."/>
        </authorList>
    </citation>
    <scope>NUCLEOTIDE SEQUENCE [LARGE SCALE GENOMIC DNA]</scope>
    <source>
        <strain>ATCC 31267 / DSM 46492 / JCM 5070 / NBRC 14893 / NCIMB 12804 / NRRL 8165 / MA-4680</strain>
    </source>
</reference>
<feature type="chain" id="PRO_0000171525" description="Small ribosomal subunit biogenesis GTPase RsgA">
    <location>
        <begin position="1"/>
        <end position="370"/>
    </location>
</feature>
<feature type="domain" description="CP-type G" evidence="2">
    <location>
        <begin position="111"/>
        <end position="270"/>
    </location>
</feature>
<feature type="binding site" evidence="1">
    <location>
        <begin position="158"/>
        <end position="161"/>
    </location>
    <ligand>
        <name>GTP</name>
        <dbReference type="ChEBI" id="CHEBI:37565"/>
    </ligand>
</feature>
<feature type="binding site" evidence="1">
    <location>
        <begin position="212"/>
        <end position="220"/>
    </location>
    <ligand>
        <name>GTP</name>
        <dbReference type="ChEBI" id="CHEBI:37565"/>
    </ligand>
</feature>
<feature type="binding site" evidence="1">
    <location>
        <position position="293"/>
    </location>
    <ligand>
        <name>Zn(2+)</name>
        <dbReference type="ChEBI" id="CHEBI:29105"/>
    </ligand>
</feature>
<feature type="binding site" evidence="1">
    <location>
        <position position="298"/>
    </location>
    <ligand>
        <name>Zn(2+)</name>
        <dbReference type="ChEBI" id="CHEBI:29105"/>
    </ligand>
</feature>
<feature type="binding site" evidence="1">
    <location>
        <position position="300"/>
    </location>
    <ligand>
        <name>Zn(2+)</name>
        <dbReference type="ChEBI" id="CHEBI:29105"/>
    </ligand>
</feature>
<feature type="binding site" evidence="1">
    <location>
        <position position="306"/>
    </location>
    <ligand>
        <name>Zn(2+)</name>
        <dbReference type="ChEBI" id="CHEBI:29105"/>
    </ligand>
</feature>
<protein>
    <recommendedName>
        <fullName evidence="1">Small ribosomal subunit biogenesis GTPase RsgA</fullName>
        <ecNumber evidence="1">3.6.1.-</ecNumber>
    </recommendedName>
</protein>
<sequence length="370" mass="39458">MSLSSLPGSFSSSSHPLVPYGWDADWEAEFAPYDSEGLLAGRVIRVDRGQCDVVTPGGMLRADTAFVTPHDPMRVVCTGDWVAVEPAGDPRYVRTYLPRRSAFVRSTSSKRSEGQILAANVDYAVVAVSLAVELDLGRVERFLALAWESGAQPVVVLTKADLVPDATTLSYLVQDVETAAPGVPVLSVSSNLGEGLDVLAAVLSGGTSVLLGQSGAGKSTLANALLGEDVMKVHATRDVDGKGRHTTTTRNLLALPGGGVLIDTPGLRGVGLWDAETGVNQVFSEIEALAAECRFHDCAHTAEPGCAVLAALDTGELPERRLDSYRKLLRENQRIVAKTDARLRAEIRRDWKRKGAEGKAAMEAKRGQWG</sequence>
<proteinExistence type="inferred from homology"/>
<keyword id="KW-0963">Cytoplasm</keyword>
<keyword id="KW-0342">GTP-binding</keyword>
<keyword id="KW-0378">Hydrolase</keyword>
<keyword id="KW-0479">Metal-binding</keyword>
<keyword id="KW-0547">Nucleotide-binding</keyword>
<keyword id="KW-1185">Reference proteome</keyword>
<keyword id="KW-0690">Ribosome biogenesis</keyword>
<keyword id="KW-0694">RNA-binding</keyword>
<keyword id="KW-0699">rRNA-binding</keyword>
<keyword id="KW-0862">Zinc</keyword>
<accession>Q82LC4</accession>
<evidence type="ECO:0000255" key="1">
    <source>
        <dbReference type="HAMAP-Rule" id="MF_01820"/>
    </source>
</evidence>
<evidence type="ECO:0000255" key="2">
    <source>
        <dbReference type="PROSITE-ProRule" id="PRU01058"/>
    </source>
</evidence>
<evidence type="ECO:0000305" key="3"/>
<name>RSGA_STRAW</name>